<protein>
    <recommendedName>
        <fullName evidence="1">33 kDa chaperonin</fullName>
    </recommendedName>
    <alternativeName>
        <fullName evidence="1">Heat shock protein 33 homolog</fullName>
        <shortName evidence="1">HSP33</shortName>
    </alternativeName>
</protein>
<keyword id="KW-0143">Chaperone</keyword>
<keyword id="KW-0963">Cytoplasm</keyword>
<keyword id="KW-1015">Disulfide bond</keyword>
<keyword id="KW-0676">Redox-active center</keyword>
<keyword id="KW-1185">Reference proteome</keyword>
<keyword id="KW-0346">Stress response</keyword>
<keyword id="KW-0862">Zinc</keyword>
<evidence type="ECO:0000255" key="1">
    <source>
        <dbReference type="HAMAP-Rule" id="MF_00117"/>
    </source>
</evidence>
<comment type="function">
    <text evidence="1">Redox regulated molecular chaperone. Protects both thermally unfolding and oxidatively damaged proteins from irreversible aggregation. Plays an important role in the bacterial defense system toward oxidative stress.</text>
</comment>
<comment type="subcellular location">
    <subcellularLocation>
        <location evidence="1">Cytoplasm</location>
    </subcellularLocation>
</comment>
<comment type="PTM">
    <text evidence="1">Under oxidizing conditions two disulfide bonds are formed involving the reactive cysteines. Under reducing conditions zinc is bound to the reactive cysteines and the protein is inactive.</text>
</comment>
<comment type="similarity">
    <text evidence="1">Belongs to the HSP33 family.</text>
</comment>
<sequence>MPQHDQLHRYLFENFAVRGELVTVSETLQQILENHDYPQPVKNVLAELLVATSLLTATLKFDGDITVQLQGDGPMNLAVINGNNNQQMRGVARVQGEIPENADLKTLVGNGYVVITITPSEGERYQGVVGLEGDTLAACLEDYFMRSEQLPTRLFIRTGDVDGKPAAGGMLLQVMPAQNAQQDDFDHLATLTETIKTEELLTLPANEVLWRLYHEEEVTVYDPQDVEFKCTCSRERCADALKTLPDEEVDSILAEDGEIDMHCDYCGNHYLFNAMDIAEIRNNASPADPQVH</sequence>
<reference key="1">
    <citation type="journal article" date="2009" name="J. Bacteriol.">
        <title>Complete genome sequence and comparative genome analysis of enteropathogenic Escherichia coli O127:H6 strain E2348/69.</title>
        <authorList>
            <person name="Iguchi A."/>
            <person name="Thomson N.R."/>
            <person name="Ogura Y."/>
            <person name="Saunders D."/>
            <person name="Ooka T."/>
            <person name="Henderson I.R."/>
            <person name="Harris D."/>
            <person name="Asadulghani M."/>
            <person name="Kurokawa K."/>
            <person name="Dean P."/>
            <person name="Kenny B."/>
            <person name="Quail M.A."/>
            <person name="Thurston S."/>
            <person name="Dougan G."/>
            <person name="Hayashi T."/>
            <person name="Parkhill J."/>
            <person name="Frankel G."/>
        </authorList>
    </citation>
    <scope>NUCLEOTIDE SEQUENCE [LARGE SCALE GENOMIC DNA]</scope>
    <source>
        <strain>E2348/69 / EPEC</strain>
    </source>
</reference>
<accession>B7UKA5</accession>
<feature type="chain" id="PRO_1000119258" description="33 kDa chaperonin">
    <location>
        <begin position="1"/>
        <end position="292"/>
    </location>
</feature>
<feature type="disulfide bond" description="Redox-active" evidence="1">
    <location>
        <begin position="230"/>
        <end position="232"/>
    </location>
</feature>
<feature type="disulfide bond" description="Redox-active" evidence="1">
    <location>
        <begin position="263"/>
        <end position="266"/>
    </location>
</feature>
<name>HSLO_ECO27</name>
<dbReference type="EMBL" id="FM180568">
    <property type="protein sequence ID" value="CAS11193.1"/>
    <property type="molecule type" value="Genomic_DNA"/>
</dbReference>
<dbReference type="RefSeq" id="WP_001135574.1">
    <property type="nucleotide sequence ID" value="NC_011601.1"/>
</dbReference>
<dbReference type="SMR" id="B7UKA5"/>
<dbReference type="GeneID" id="93778597"/>
<dbReference type="KEGG" id="ecg:E2348C_3645"/>
<dbReference type="HOGENOM" id="CLU_054493_0_0_6"/>
<dbReference type="Proteomes" id="UP000008205">
    <property type="component" value="Chromosome"/>
</dbReference>
<dbReference type="GO" id="GO:0005737">
    <property type="term" value="C:cytoplasm"/>
    <property type="evidence" value="ECO:0007669"/>
    <property type="project" value="UniProtKB-SubCell"/>
</dbReference>
<dbReference type="GO" id="GO:0044183">
    <property type="term" value="F:protein folding chaperone"/>
    <property type="evidence" value="ECO:0007669"/>
    <property type="project" value="TreeGrafter"/>
</dbReference>
<dbReference type="GO" id="GO:0051082">
    <property type="term" value="F:unfolded protein binding"/>
    <property type="evidence" value="ECO:0007669"/>
    <property type="project" value="UniProtKB-UniRule"/>
</dbReference>
<dbReference type="GO" id="GO:0042026">
    <property type="term" value="P:protein refolding"/>
    <property type="evidence" value="ECO:0007669"/>
    <property type="project" value="TreeGrafter"/>
</dbReference>
<dbReference type="CDD" id="cd00498">
    <property type="entry name" value="Hsp33"/>
    <property type="match status" value="1"/>
</dbReference>
<dbReference type="FunFam" id="3.55.30.10:FF:000001">
    <property type="entry name" value="33 kDa chaperonin"/>
    <property type="match status" value="1"/>
</dbReference>
<dbReference type="Gene3D" id="1.10.287.480">
    <property type="entry name" value="helix hairpin bin"/>
    <property type="match status" value="1"/>
</dbReference>
<dbReference type="Gene3D" id="3.55.30.10">
    <property type="entry name" value="Hsp33 domain"/>
    <property type="match status" value="1"/>
</dbReference>
<dbReference type="Gene3D" id="3.90.1280.10">
    <property type="entry name" value="HSP33 redox switch-like"/>
    <property type="match status" value="1"/>
</dbReference>
<dbReference type="HAMAP" id="MF_00117">
    <property type="entry name" value="HslO"/>
    <property type="match status" value="1"/>
</dbReference>
<dbReference type="InterPro" id="IPR000397">
    <property type="entry name" value="Heat_shock_Hsp33"/>
</dbReference>
<dbReference type="InterPro" id="IPR016154">
    <property type="entry name" value="Heat_shock_Hsp33_C"/>
</dbReference>
<dbReference type="InterPro" id="IPR016153">
    <property type="entry name" value="Heat_shock_Hsp33_N"/>
</dbReference>
<dbReference type="InterPro" id="IPR023212">
    <property type="entry name" value="Hsp33_helix_hairpin_bin_dom_sf"/>
</dbReference>
<dbReference type="NCBIfam" id="NF001033">
    <property type="entry name" value="PRK00114.1"/>
    <property type="match status" value="1"/>
</dbReference>
<dbReference type="PANTHER" id="PTHR30111">
    <property type="entry name" value="33 KDA CHAPERONIN"/>
    <property type="match status" value="1"/>
</dbReference>
<dbReference type="PANTHER" id="PTHR30111:SF1">
    <property type="entry name" value="33 KDA CHAPERONIN"/>
    <property type="match status" value="1"/>
</dbReference>
<dbReference type="Pfam" id="PF01430">
    <property type="entry name" value="HSP33"/>
    <property type="match status" value="1"/>
</dbReference>
<dbReference type="PIRSF" id="PIRSF005261">
    <property type="entry name" value="Heat_shock_Hsp33"/>
    <property type="match status" value="1"/>
</dbReference>
<dbReference type="SUPFAM" id="SSF64397">
    <property type="entry name" value="Hsp33 domain"/>
    <property type="match status" value="1"/>
</dbReference>
<dbReference type="SUPFAM" id="SSF118352">
    <property type="entry name" value="HSP33 redox switch-like"/>
    <property type="match status" value="1"/>
</dbReference>
<gene>
    <name evidence="1" type="primary">hslO</name>
    <name type="ordered locus">E2348C_3645</name>
</gene>
<organism>
    <name type="scientific">Escherichia coli O127:H6 (strain E2348/69 / EPEC)</name>
    <dbReference type="NCBI Taxonomy" id="574521"/>
    <lineage>
        <taxon>Bacteria</taxon>
        <taxon>Pseudomonadati</taxon>
        <taxon>Pseudomonadota</taxon>
        <taxon>Gammaproteobacteria</taxon>
        <taxon>Enterobacterales</taxon>
        <taxon>Enterobacteriaceae</taxon>
        <taxon>Escherichia</taxon>
    </lineage>
</organism>
<proteinExistence type="inferred from homology"/>